<proteinExistence type="evidence at protein level"/>
<evidence type="ECO:0000269" key="1">
    <source>
    </source>
</evidence>
<evidence type="ECO:0000303" key="2">
    <source>
    </source>
</evidence>
<evidence type="ECO:0000305" key="3"/>
<evidence type="ECO:0000305" key="4">
    <source>
    </source>
</evidence>
<protein>
    <recommendedName>
        <fullName evidence="2">Conotoxin flf14a</fullName>
    </recommendedName>
</protein>
<name>CREA_CONAW</name>
<keyword id="KW-0903">Direct protein sequencing</keyword>
<keyword id="KW-1015">Disulfide bond</keyword>
<keyword id="KW-0964">Secreted</keyword>
<keyword id="KW-0800">Toxin</keyword>
<feature type="peptide" id="PRO_0000044515" description="Conotoxin flf14a" evidence="1">
    <location>
        <begin position="1"/>
        <end position="27"/>
    </location>
</feature>
<feature type="disulfide bond" evidence="1">
    <location>
        <begin position="6"/>
        <end position="26"/>
    </location>
</feature>
<feature type="disulfide bond" evidence="1">
    <location>
        <begin position="10"/>
        <end position="22"/>
    </location>
</feature>
<dbReference type="ConoServer" id="1499">
    <property type="toxin name" value="FlfXIVA"/>
</dbReference>
<dbReference type="GO" id="GO:0005576">
    <property type="term" value="C:extracellular region"/>
    <property type="evidence" value="ECO:0007669"/>
    <property type="project" value="UniProtKB-SubCell"/>
</dbReference>
<dbReference type="GO" id="GO:0090729">
    <property type="term" value="F:toxin activity"/>
    <property type="evidence" value="ECO:0007669"/>
    <property type="project" value="UniProtKB-KW"/>
</dbReference>
<sequence>WDVNDCIHFCLIGVVERSYTECHTMCT</sequence>
<accession>P84705</accession>
<comment type="subcellular location">
    <subcellularLocation>
        <location evidence="1">Secreted</location>
    </subcellularLocation>
</comment>
<comment type="tissue specificity">
    <text evidence="4">Expressed by the venom duct.</text>
</comment>
<comment type="domain">
    <text evidence="3">The cysteine framework is XIV (C-C-C-C).</text>
</comment>
<comment type="mass spectrometry"/>
<comment type="similarity">
    <text evidence="3">Belongs to the conotoxin R superfamily.</text>
</comment>
<reference key="1">
    <citation type="journal article" date="2005" name="Biochemistry">
        <title>A novel conotoxin framework with a helix-loop-helix (Cs alpha/alpha) fold.</title>
        <authorList>
            <person name="Moller C."/>
            <person name="Rahmankhah S."/>
            <person name="Lauer-Fields J."/>
            <person name="Bubis J."/>
            <person name="Fields G.B."/>
            <person name="Mari F."/>
        </authorList>
    </citation>
    <scope>PROTEIN SEQUENCE</scope>
    <scope>SUBCELLULAR LOCATION</scope>
    <scope>MASS SPECTROMETRY</scope>
    <scope>DISULFIDE BONDS</scope>
    <source>
        <tissue>Venom</tissue>
    </source>
</reference>
<organism>
    <name type="scientific">Conus anabathrum floridanus</name>
    <name type="common">Florida cone</name>
    <name type="synonym">Conus floridanus floridensis</name>
    <dbReference type="NCBI Taxonomy" id="1520082"/>
    <lineage>
        <taxon>Eukaryota</taxon>
        <taxon>Metazoa</taxon>
        <taxon>Spiralia</taxon>
        <taxon>Lophotrochozoa</taxon>
        <taxon>Mollusca</taxon>
        <taxon>Gastropoda</taxon>
        <taxon>Caenogastropoda</taxon>
        <taxon>Neogastropoda</taxon>
        <taxon>Conoidea</taxon>
        <taxon>Conidae</taxon>
        <taxon>Conus</taxon>
        <taxon>Dauciconus</taxon>
    </lineage>
</organism>